<organism>
    <name type="scientific">Streptococcus uberis (strain ATCC BAA-854 / 0140J)</name>
    <dbReference type="NCBI Taxonomy" id="218495"/>
    <lineage>
        <taxon>Bacteria</taxon>
        <taxon>Bacillati</taxon>
        <taxon>Bacillota</taxon>
        <taxon>Bacilli</taxon>
        <taxon>Lactobacillales</taxon>
        <taxon>Streptococcaceae</taxon>
        <taxon>Streptococcus</taxon>
    </lineage>
</organism>
<proteinExistence type="inferred from homology"/>
<dbReference type="EMBL" id="AM946015">
    <property type="protein sequence ID" value="CAR40465.1"/>
    <property type="molecule type" value="Genomic_DNA"/>
</dbReference>
<dbReference type="RefSeq" id="WP_012657644.1">
    <property type="nucleotide sequence ID" value="NC_012004.1"/>
</dbReference>
<dbReference type="SMR" id="B9DSW5"/>
<dbReference type="STRING" id="218495.SUB0083"/>
<dbReference type="GeneID" id="93825309"/>
<dbReference type="KEGG" id="sub:SUB0083"/>
<dbReference type="eggNOG" id="COG0097">
    <property type="taxonomic scope" value="Bacteria"/>
</dbReference>
<dbReference type="HOGENOM" id="CLU_065464_1_2_9"/>
<dbReference type="OrthoDB" id="9805007at2"/>
<dbReference type="Proteomes" id="UP000000449">
    <property type="component" value="Chromosome"/>
</dbReference>
<dbReference type="GO" id="GO:0022625">
    <property type="term" value="C:cytosolic large ribosomal subunit"/>
    <property type="evidence" value="ECO:0007669"/>
    <property type="project" value="TreeGrafter"/>
</dbReference>
<dbReference type="GO" id="GO:0019843">
    <property type="term" value="F:rRNA binding"/>
    <property type="evidence" value="ECO:0007669"/>
    <property type="project" value="UniProtKB-UniRule"/>
</dbReference>
<dbReference type="GO" id="GO:0003735">
    <property type="term" value="F:structural constituent of ribosome"/>
    <property type="evidence" value="ECO:0007669"/>
    <property type="project" value="InterPro"/>
</dbReference>
<dbReference type="GO" id="GO:0002181">
    <property type="term" value="P:cytoplasmic translation"/>
    <property type="evidence" value="ECO:0007669"/>
    <property type="project" value="TreeGrafter"/>
</dbReference>
<dbReference type="FunFam" id="3.90.930.12:FF:000001">
    <property type="entry name" value="50S ribosomal protein L6"/>
    <property type="match status" value="1"/>
</dbReference>
<dbReference type="FunFam" id="3.90.930.12:FF:000002">
    <property type="entry name" value="50S ribosomal protein L6"/>
    <property type="match status" value="1"/>
</dbReference>
<dbReference type="Gene3D" id="3.90.930.12">
    <property type="entry name" value="Ribosomal protein L6, alpha-beta domain"/>
    <property type="match status" value="2"/>
</dbReference>
<dbReference type="HAMAP" id="MF_01365_B">
    <property type="entry name" value="Ribosomal_uL6_B"/>
    <property type="match status" value="1"/>
</dbReference>
<dbReference type="InterPro" id="IPR000702">
    <property type="entry name" value="Ribosomal_uL6-like"/>
</dbReference>
<dbReference type="InterPro" id="IPR036789">
    <property type="entry name" value="Ribosomal_uL6-like_a/b-dom_sf"/>
</dbReference>
<dbReference type="InterPro" id="IPR020040">
    <property type="entry name" value="Ribosomal_uL6_a/b-dom"/>
</dbReference>
<dbReference type="InterPro" id="IPR019906">
    <property type="entry name" value="Ribosomal_uL6_bac-type"/>
</dbReference>
<dbReference type="InterPro" id="IPR002358">
    <property type="entry name" value="Ribosomal_uL6_CS"/>
</dbReference>
<dbReference type="NCBIfam" id="TIGR03654">
    <property type="entry name" value="L6_bact"/>
    <property type="match status" value="1"/>
</dbReference>
<dbReference type="PANTHER" id="PTHR11655">
    <property type="entry name" value="60S/50S RIBOSOMAL PROTEIN L6/L9"/>
    <property type="match status" value="1"/>
</dbReference>
<dbReference type="PANTHER" id="PTHR11655:SF14">
    <property type="entry name" value="LARGE RIBOSOMAL SUBUNIT PROTEIN UL6M"/>
    <property type="match status" value="1"/>
</dbReference>
<dbReference type="Pfam" id="PF00347">
    <property type="entry name" value="Ribosomal_L6"/>
    <property type="match status" value="2"/>
</dbReference>
<dbReference type="PIRSF" id="PIRSF002162">
    <property type="entry name" value="Ribosomal_L6"/>
    <property type="match status" value="1"/>
</dbReference>
<dbReference type="PRINTS" id="PR00059">
    <property type="entry name" value="RIBOSOMALL6"/>
</dbReference>
<dbReference type="SUPFAM" id="SSF56053">
    <property type="entry name" value="Ribosomal protein L6"/>
    <property type="match status" value="2"/>
</dbReference>
<dbReference type="PROSITE" id="PS00525">
    <property type="entry name" value="RIBOSOMAL_L6_1"/>
    <property type="match status" value="1"/>
</dbReference>
<keyword id="KW-1185">Reference proteome</keyword>
<keyword id="KW-0687">Ribonucleoprotein</keyword>
<keyword id="KW-0689">Ribosomal protein</keyword>
<keyword id="KW-0694">RNA-binding</keyword>
<keyword id="KW-0699">rRNA-binding</keyword>
<feature type="chain" id="PRO_1000166833" description="Large ribosomal subunit protein uL6">
    <location>
        <begin position="1"/>
        <end position="178"/>
    </location>
</feature>
<accession>B9DSW5</accession>
<protein>
    <recommendedName>
        <fullName evidence="1">Large ribosomal subunit protein uL6</fullName>
    </recommendedName>
    <alternativeName>
        <fullName evidence="2">50S ribosomal protein L6</fullName>
    </alternativeName>
</protein>
<name>RL6_STRU0</name>
<sequence>MSRIGNKIITMPAGVELKNDNNVVTVKGPKGELTREFNKNIEIKVEGTEITVSRPNDSKEMKTIHGTTRALLNNMVQGVSEGFKKELEMKGVGYRAQLQGNKLVLSVGKSHQDEVEAPEGITFTVATPTTIAVEGISKELVGQTAAYIRSLRSPEPYKGKGIRYVGEYVRLKEGKTGK</sequence>
<gene>
    <name evidence="1" type="primary">rplF</name>
    <name type="ordered locus">SUB0083</name>
</gene>
<reference key="1">
    <citation type="journal article" date="2009" name="BMC Genomics">
        <title>Evidence for niche adaptation in the genome of the bovine pathogen Streptococcus uberis.</title>
        <authorList>
            <person name="Ward P.N."/>
            <person name="Holden M.T.G."/>
            <person name="Leigh J.A."/>
            <person name="Lennard N."/>
            <person name="Bignell A."/>
            <person name="Barron A."/>
            <person name="Clark L."/>
            <person name="Quail M.A."/>
            <person name="Woodward J."/>
            <person name="Barrell B.G."/>
            <person name="Egan S.A."/>
            <person name="Field T.R."/>
            <person name="Maskell D."/>
            <person name="Kehoe M."/>
            <person name="Dowson C.G."/>
            <person name="Chanter N."/>
            <person name="Whatmore A.M."/>
            <person name="Bentley S.D."/>
            <person name="Parkhill J."/>
        </authorList>
    </citation>
    <scope>NUCLEOTIDE SEQUENCE [LARGE SCALE GENOMIC DNA]</scope>
    <source>
        <strain>ATCC BAA-854 / 0140J</strain>
    </source>
</reference>
<comment type="function">
    <text evidence="1">This protein binds to the 23S rRNA, and is important in its secondary structure. It is located near the subunit interface in the base of the L7/L12 stalk, and near the tRNA binding site of the peptidyltransferase center.</text>
</comment>
<comment type="subunit">
    <text evidence="1">Part of the 50S ribosomal subunit.</text>
</comment>
<comment type="similarity">
    <text evidence="1">Belongs to the universal ribosomal protein uL6 family.</text>
</comment>
<evidence type="ECO:0000255" key="1">
    <source>
        <dbReference type="HAMAP-Rule" id="MF_01365"/>
    </source>
</evidence>
<evidence type="ECO:0000305" key="2"/>